<sequence>MSQYAPSPDFKRALDSSPEANTEDDKTEEDVPMPKNYLWLTIVSCFCPAYPINIVALVFSIMSLNSYNDGDYEGARRLGRNAKWVAIASIIIGLLIIGISCAVHFTRNA</sequence>
<reference key="1">
    <citation type="journal article" date="2004" name="Nat. Genet.">
        <title>Complete sequencing and characterization of 21,243 full-length human cDNAs.</title>
        <authorList>
            <person name="Ota T."/>
            <person name="Suzuki Y."/>
            <person name="Nishikawa T."/>
            <person name="Otsuki T."/>
            <person name="Sugiyama T."/>
            <person name="Irie R."/>
            <person name="Wakamatsu A."/>
            <person name="Hayashi K."/>
            <person name="Sato H."/>
            <person name="Nagai K."/>
            <person name="Kimura K."/>
            <person name="Makita H."/>
            <person name="Sekine M."/>
            <person name="Obayashi M."/>
            <person name="Nishi T."/>
            <person name="Shibahara T."/>
            <person name="Tanaka T."/>
            <person name="Ishii S."/>
            <person name="Yamamoto J."/>
            <person name="Saito K."/>
            <person name="Kawai Y."/>
            <person name="Isono Y."/>
            <person name="Nakamura Y."/>
            <person name="Nagahari K."/>
            <person name="Murakami K."/>
            <person name="Yasuda T."/>
            <person name="Iwayanagi T."/>
            <person name="Wagatsuma M."/>
            <person name="Shiratori A."/>
            <person name="Sudo H."/>
            <person name="Hosoiri T."/>
            <person name="Kaku Y."/>
            <person name="Kodaira H."/>
            <person name="Kondo H."/>
            <person name="Sugawara M."/>
            <person name="Takahashi M."/>
            <person name="Kanda K."/>
            <person name="Yokoi T."/>
            <person name="Furuya T."/>
            <person name="Kikkawa E."/>
            <person name="Omura Y."/>
            <person name="Abe K."/>
            <person name="Kamihara K."/>
            <person name="Katsuta N."/>
            <person name="Sato K."/>
            <person name="Tanikawa M."/>
            <person name="Yamazaki M."/>
            <person name="Ninomiya K."/>
            <person name="Ishibashi T."/>
            <person name="Yamashita H."/>
            <person name="Murakawa K."/>
            <person name="Fujimori K."/>
            <person name="Tanai H."/>
            <person name="Kimata M."/>
            <person name="Watanabe M."/>
            <person name="Hiraoka S."/>
            <person name="Chiba Y."/>
            <person name="Ishida S."/>
            <person name="Ono Y."/>
            <person name="Takiguchi S."/>
            <person name="Watanabe S."/>
            <person name="Yosida M."/>
            <person name="Hotuta T."/>
            <person name="Kusano J."/>
            <person name="Kanehori K."/>
            <person name="Takahashi-Fujii A."/>
            <person name="Hara H."/>
            <person name="Tanase T.-O."/>
            <person name="Nomura Y."/>
            <person name="Togiya S."/>
            <person name="Komai F."/>
            <person name="Hara R."/>
            <person name="Takeuchi K."/>
            <person name="Arita M."/>
            <person name="Imose N."/>
            <person name="Musashino K."/>
            <person name="Yuuki H."/>
            <person name="Oshima A."/>
            <person name="Sasaki N."/>
            <person name="Aotsuka S."/>
            <person name="Yoshikawa Y."/>
            <person name="Matsunawa H."/>
            <person name="Ichihara T."/>
            <person name="Shiohata N."/>
            <person name="Sano S."/>
            <person name="Moriya S."/>
            <person name="Momiyama H."/>
            <person name="Satoh N."/>
            <person name="Takami S."/>
            <person name="Terashima Y."/>
            <person name="Suzuki O."/>
            <person name="Nakagawa S."/>
            <person name="Senoh A."/>
            <person name="Mizoguchi H."/>
            <person name="Goto Y."/>
            <person name="Shimizu F."/>
            <person name="Wakebe H."/>
            <person name="Hishigaki H."/>
            <person name="Watanabe T."/>
            <person name="Sugiyama A."/>
            <person name="Takemoto M."/>
            <person name="Kawakami B."/>
            <person name="Yamazaki M."/>
            <person name="Watanabe K."/>
            <person name="Kumagai A."/>
            <person name="Itakura S."/>
            <person name="Fukuzumi Y."/>
            <person name="Fujimori Y."/>
            <person name="Komiyama M."/>
            <person name="Tashiro H."/>
            <person name="Tanigami A."/>
            <person name="Fujiwara T."/>
            <person name="Ono T."/>
            <person name="Yamada K."/>
            <person name="Fujii Y."/>
            <person name="Ozaki K."/>
            <person name="Hirao M."/>
            <person name="Ohmori Y."/>
            <person name="Kawabata A."/>
            <person name="Hikiji T."/>
            <person name="Kobatake N."/>
            <person name="Inagaki H."/>
            <person name="Ikema Y."/>
            <person name="Okamoto S."/>
            <person name="Okitani R."/>
            <person name="Kawakami T."/>
            <person name="Noguchi S."/>
            <person name="Itoh T."/>
            <person name="Shigeta K."/>
            <person name="Senba T."/>
            <person name="Matsumura K."/>
            <person name="Nakajima Y."/>
            <person name="Mizuno T."/>
            <person name="Morinaga M."/>
            <person name="Sasaki M."/>
            <person name="Togashi T."/>
            <person name="Oyama M."/>
            <person name="Hata H."/>
            <person name="Watanabe M."/>
            <person name="Komatsu T."/>
            <person name="Mizushima-Sugano J."/>
            <person name="Satoh T."/>
            <person name="Shirai Y."/>
            <person name="Takahashi Y."/>
            <person name="Nakagawa K."/>
            <person name="Okumura K."/>
            <person name="Nagase T."/>
            <person name="Nomura N."/>
            <person name="Kikuchi H."/>
            <person name="Masuho Y."/>
            <person name="Yamashita R."/>
            <person name="Nakai K."/>
            <person name="Yada T."/>
            <person name="Nakamura Y."/>
            <person name="Ohara O."/>
            <person name="Isogai T."/>
            <person name="Sugano S."/>
        </authorList>
    </citation>
    <scope>NUCLEOTIDE SEQUENCE [LARGE SCALE MRNA]</scope>
    <source>
        <tissue>Thalamus</tissue>
    </source>
</reference>
<reference key="2">
    <citation type="journal article" date="2006" name="Nature">
        <title>The finished DNA sequence of human chromosome 12.</title>
        <authorList>
            <person name="Scherer S.E."/>
            <person name="Muzny D.M."/>
            <person name="Buhay C.J."/>
            <person name="Chen R."/>
            <person name="Cree A."/>
            <person name="Ding Y."/>
            <person name="Dugan-Rocha S."/>
            <person name="Gill R."/>
            <person name="Gunaratne P."/>
            <person name="Harris R.A."/>
            <person name="Hawes A.C."/>
            <person name="Hernandez J."/>
            <person name="Hodgson A.V."/>
            <person name="Hume J."/>
            <person name="Jackson A."/>
            <person name="Khan Z.M."/>
            <person name="Kovar-Smith C."/>
            <person name="Lewis L.R."/>
            <person name="Lozado R.J."/>
            <person name="Metzker M.L."/>
            <person name="Milosavljevic A."/>
            <person name="Miner G.R."/>
            <person name="Montgomery K.T."/>
            <person name="Morgan M.B."/>
            <person name="Nazareth L.V."/>
            <person name="Scott G."/>
            <person name="Sodergren E."/>
            <person name="Song X.-Z."/>
            <person name="Steffen D."/>
            <person name="Lovering R.C."/>
            <person name="Wheeler D.A."/>
            <person name="Worley K.C."/>
            <person name="Yuan Y."/>
            <person name="Zhang Z."/>
            <person name="Adams C.Q."/>
            <person name="Ansari-Lari M.A."/>
            <person name="Ayele M."/>
            <person name="Brown M.J."/>
            <person name="Chen G."/>
            <person name="Chen Z."/>
            <person name="Clerc-Blankenburg K.P."/>
            <person name="Davis C."/>
            <person name="Delgado O."/>
            <person name="Dinh H.H."/>
            <person name="Draper H."/>
            <person name="Gonzalez-Garay M.L."/>
            <person name="Havlak P."/>
            <person name="Jackson L.R."/>
            <person name="Jacob L.S."/>
            <person name="Kelly S.H."/>
            <person name="Li L."/>
            <person name="Li Z."/>
            <person name="Liu J."/>
            <person name="Liu W."/>
            <person name="Lu J."/>
            <person name="Maheshwari M."/>
            <person name="Nguyen B.-V."/>
            <person name="Okwuonu G.O."/>
            <person name="Pasternak S."/>
            <person name="Perez L.M."/>
            <person name="Plopper F.J.H."/>
            <person name="Santibanez J."/>
            <person name="Shen H."/>
            <person name="Tabor P.E."/>
            <person name="Verduzco D."/>
            <person name="Waldron L."/>
            <person name="Wang Q."/>
            <person name="Williams G.A."/>
            <person name="Zhang J."/>
            <person name="Zhou J."/>
            <person name="Allen C.C."/>
            <person name="Amin A.G."/>
            <person name="Anyalebechi V."/>
            <person name="Bailey M."/>
            <person name="Barbaria J.A."/>
            <person name="Bimage K.E."/>
            <person name="Bryant N.P."/>
            <person name="Burch P.E."/>
            <person name="Burkett C.E."/>
            <person name="Burrell K.L."/>
            <person name="Calderon E."/>
            <person name="Cardenas V."/>
            <person name="Carter K."/>
            <person name="Casias K."/>
            <person name="Cavazos I."/>
            <person name="Cavazos S.R."/>
            <person name="Ceasar H."/>
            <person name="Chacko J."/>
            <person name="Chan S.N."/>
            <person name="Chavez D."/>
            <person name="Christopoulos C."/>
            <person name="Chu J."/>
            <person name="Cockrell R."/>
            <person name="Cox C.D."/>
            <person name="Dang M."/>
            <person name="Dathorne S.R."/>
            <person name="David R."/>
            <person name="Davis C.M."/>
            <person name="Davy-Carroll L."/>
            <person name="Deshazo D.R."/>
            <person name="Donlin J.E."/>
            <person name="D'Souza L."/>
            <person name="Eaves K.A."/>
            <person name="Egan A."/>
            <person name="Emery-Cohen A.J."/>
            <person name="Escotto M."/>
            <person name="Flagg N."/>
            <person name="Forbes L.D."/>
            <person name="Gabisi A.M."/>
            <person name="Garza M."/>
            <person name="Hamilton C."/>
            <person name="Henderson N."/>
            <person name="Hernandez O."/>
            <person name="Hines S."/>
            <person name="Hogues M.E."/>
            <person name="Huang M."/>
            <person name="Idlebird D.G."/>
            <person name="Johnson R."/>
            <person name="Jolivet A."/>
            <person name="Jones S."/>
            <person name="Kagan R."/>
            <person name="King L.M."/>
            <person name="Leal B."/>
            <person name="Lebow H."/>
            <person name="Lee S."/>
            <person name="LeVan J.M."/>
            <person name="Lewis L.C."/>
            <person name="London P."/>
            <person name="Lorensuhewa L.M."/>
            <person name="Loulseged H."/>
            <person name="Lovett D.A."/>
            <person name="Lucier A."/>
            <person name="Lucier R.L."/>
            <person name="Ma J."/>
            <person name="Madu R.C."/>
            <person name="Mapua P."/>
            <person name="Martindale A.D."/>
            <person name="Martinez E."/>
            <person name="Massey E."/>
            <person name="Mawhiney S."/>
            <person name="Meador M.G."/>
            <person name="Mendez S."/>
            <person name="Mercado C."/>
            <person name="Mercado I.C."/>
            <person name="Merritt C.E."/>
            <person name="Miner Z.L."/>
            <person name="Minja E."/>
            <person name="Mitchell T."/>
            <person name="Mohabbat F."/>
            <person name="Mohabbat K."/>
            <person name="Montgomery B."/>
            <person name="Moore N."/>
            <person name="Morris S."/>
            <person name="Munidasa M."/>
            <person name="Ngo R.N."/>
            <person name="Nguyen N.B."/>
            <person name="Nickerson E."/>
            <person name="Nwaokelemeh O.O."/>
            <person name="Nwokenkwo S."/>
            <person name="Obregon M."/>
            <person name="Oguh M."/>
            <person name="Oragunye N."/>
            <person name="Oviedo R.J."/>
            <person name="Parish B.J."/>
            <person name="Parker D.N."/>
            <person name="Parrish J."/>
            <person name="Parks K.L."/>
            <person name="Paul H.A."/>
            <person name="Payton B.A."/>
            <person name="Perez A."/>
            <person name="Perrin W."/>
            <person name="Pickens A."/>
            <person name="Primus E.L."/>
            <person name="Pu L.-L."/>
            <person name="Puazo M."/>
            <person name="Quiles M.M."/>
            <person name="Quiroz J.B."/>
            <person name="Rabata D."/>
            <person name="Reeves K."/>
            <person name="Ruiz S.J."/>
            <person name="Shao H."/>
            <person name="Sisson I."/>
            <person name="Sonaike T."/>
            <person name="Sorelle R.P."/>
            <person name="Sutton A.E."/>
            <person name="Svatek A.F."/>
            <person name="Svetz L.A."/>
            <person name="Tamerisa K.S."/>
            <person name="Taylor T.R."/>
            <person name="Teague B."/>
            <person name="Thomas N."/>
            <person name="Thorn R.D."/>
            <person name="Trejos Z.Y."/>
            <person name="Trevino B.K."/>
            <person name="Ukegbu O.N."/>
            <person name="Urban J.B."/>
            <person name="Vasquez L.I."/>
            <person name="Vera V.A."/>
            <person name="Villasana D.M."/>
            <person name="Wang L."/>
            <person name="Ward-Moore S."/>
            <person name="Warren J.T."/>
            <person name="Wei X."/>
            <person name="White F."/>
            <person name="Williamson A.L."/>
            <person name="Wleczyk R."/>
            <person name="Wooden H.S."/>
            <person name="Wooden S.H."/>
            <person name="Yen J."/>
            <person name="Yoon L."/>
            <person name="Yoon V."/>
            <person name="Zorrilla S.E."/>
            <person name="Nelson D."/>
            <person name="Kucherlapati R."/>
            <person name="Weinstock G."/>
            <person name="Gibbs R.A."/>
        </authorList>
    </citation>
    <scope>NUCLEOTIDE SEQUENCE [LARGE SCALE GENOMIC DNA]</scope>
</reference>
<reference key="3">
    <citation type="journal article" date="2012" name="PLoS ONE">
        <title>The dispanins: a novel gene family of ancient origin that contains 14 human members.</title>
        <authorList>
            <person name="Sallman Almen M."/>
            <person name="Bringeland N."/>
            <person name="Fredriksson R."/>
            <person name="Schioth H.B."/>
        </authorList>
    </citation>
    <scope>GENE FAMILY</scope>
</reference>
<reference key="4">
    <citation type="journal article" date="2023" name="Nat. Commun.">
        <title>Pain-causing stinging nettle toxins target TMEM233 to modulate NaV1.7 function.</title>
        <authorList>
            <person name="Jami S."/>
            <person name="Deuis J.R."/>
            <person name="Klasfauseweh T."/>
            <person name="Cheng X."/>
            <person name="Kurdyukov S."/>
            <person name="Chung F."/>
            <person name="Okorokov A.L."/>
            <person name="Li S."/>
            <person name="Zhang J."/>
            <person name="Cristofori-Armstrong B."/>
            <person name="Israel M.R."/>
            <person name="Ju R.J."/>
            <person name="Robinson S.D."/>
            <person name="Zhao P."/>
            <person name="Ragnarsson L."/>
            <person name="Andersson A."/>
            <person name="Tran P."/>
            <person name="Schendel V."/>
            <person name="McMahon K.L."/>
            <person name="Tran H.N.T."/>
            <person name="Chin Y.K."/>
            <person name="Zhu Y."/>
            <person name="Liu J."/>
            <person name="Crawford T."/>
            <person name="Purushothamvasan S."/>
            <person name="Habib A.M."/>
            <person name="Andersson D.A."/>
            <person name="Rash L.D."/>
            <person name="Wood J.N."/>
            <person name="Zhao J."/>
            <person name="Stehbens S.J."/>
            <person name="Mobli M."/>
            <person name="Leffler A."/>
            <person name="Jiang D."/>
            <person name="Cox J.J."/>
            <person name="Waxman S.G."/>
            <person name="Dib-Hajj S.D."/>
            <person name="Gregory Neely G."/>
            <person name="Durek T."/>
            <person name="Vetter I."/>
        </authorList>
    </citation>
    <scope>FUNCTION</scope>
    <scope>SUBUNIT</scope>
    <scope>SUBCELLULAR LOCATION</scope>
    <scope>TISSUE SPECIFICITY</scope>
    <scope>TOPOLOGY</scope>
</reference>
<feature type="chain" id="PRO_0000394962" description="Transmembrane protein 233">
    <location>
        <begin position="1"/>
        <end position="109"/>
    </location>
</feature>
<feature type="topological domain" description="Cytoplasmic" evidence="4">
    <location>
        <begin position="1"/>
        <end position="41"/>
    </location>
</feature>
<feature type="intramembrane region" description="Helical" evidence="1 2 7">
    <location>
        <begin position="42"/>
        <end position="62"/>
    </location>
</feature>
<feature type="topological domain" description="Cytoplasmic" evidence="2">
    <location>
        <begin position="63"/>
        <end position="84"/>
    </location>
</feature>
<feature type="transmembrane region" description="Helical" evidence="2 7">
    <location>
        <begin position="85"/>
        <end position="105"/>
    </location>
</feature>
<feature type="topological domain" description="Extracellular" evidence="4">
    <location>
        <begin position="106"/>
        <end position="109"/>
    </location>
</feature>
<feature type="region of interest" description="Disordered" evidence="3">
    <location>
        <begin position="1"/>
        <end position="30"/>
    </location>
</feature>
<feature type="compositionally biased region" description="Acidic residues" evidence="3">
    <location>
        <begin position="21"/>
        <end position="30"/>
    </location>
</feature>
<protein>
    <recommendedName>
        <fullName>Transmembrane protein 233</fullName>
    </recommendedName>
    <alternativeName>
        <fullName>Dispanin subfamily B member 2</fullName>
        <shortName>DSPB2</shortName>
    </alternativeName>
    <alternativeName>
        <fullName>Interferon-induced transmembrane domain-containing protein D2</fullName>
    </alternativeName>
</protein>
<accession>B4DJY2</accession>
<evidence type="ECO:0000250" key="1">
    <source>
        <dbReference type="UniProtKB" id="E9PUL5"/>
    </source>
</evidence>
<evidence type="ECO:0000255" key="2"/>
<evidence type="ECO:0000256" key="3">
    <source>
        <dbReference type="SAM" id="MobiDB-lite"/>
    </source>
</evidence>
<evidence type="ECO:0000269" key="4">
    <source>
    </source>
</evidence>
<evidence type="ECO:0000303" key="5">
    <source>
    </source>
</evidence>
<evidence type="ECO:0000305" key="6"/>
<evidence type="ECO:0000305" key="7">
    <source>
    </source>
</evidence>
<dbReference type="EMBL" id="AK296289">
    <property type="protein sequence ID" value="BAG58994.1"/>
    <property type="molecule type" value="mRNA"/>
</dbReference>
<dbReference type="EMBL" id="AC002070">
    <property type="status" value="NOT_ANNOTATED_CDS"/>
    <property type="molecule type" value="Genomic_DNA"/>
</dbReference>
<dbReference type="EMBL" id="AC002563">
    <property type="status" value="NOT_ANNOTATED_CDS"/>
    <property type="molecule type" value="Genomic_DNA"/>
</dbReference>
<dbReference type="CCDS" id="CCDS44995.1"/>
<dbReference type="RefSeq" id="NP_001130006.1">
    <property type="nucleotide sequence ID" value="NM_001136534.3"/>
</dbReference>
<dbReference type="BioGRID" id="132489">
    <property type="interactions" value="1"/>
</dbReference>
<dbReference type="FunCoup" id="B4DJY2">
    <property type="interactions" value="89"/>
</dbReference>
<dbReference type="STRING" id="9606.ENSP00000403130"/>
<dbReference type="iPTMnet" id="B4DJY2"/>
<dbReference type="PhosphoSitePlus" id="B4DJY2"/>
<dbReference type="BioMuta" id="TMEM233"/>
<dbReference type="jPOST" id="B4DJY2"/>
<dbReference type="MassIVE" id="B4DJY2"/>
<dbReference type="PaxDb" id="9606-ENSP00000403130"/>
<dbReference type="PeptideAtlas" id="B4DJY2"/>
<dbReference type="ProteomicsDB" id="4418"/>
<dbReference type="Antibodypedia" id="81983">
    <property type="antibodies" value="2 antibodies from 2 providers"/>
</dbReference>
<dbReference type="DNASU" id="387890"/>
<dbReference type="Ensembl" id="ENST00000426426.3">
    <property type="protein sequence ID" value="ENSP00000403130.1"/>
    <property type="gene ID" value="ENSG00000224982.4"/>
</dbReference>
<dbReference type="GeneID" id="387890"/>
<dbReference type="KEGG" id="hsa:387890"/>
<dbReference type="MANE-Select" id="ENST00000426426.3">
    <property type="protein sequence ID" value="ENSP00000403130.1"/>
    <property type="RefSeq nucleotide sequence ID" value="NM_001136534.3"/>
    <property type="RefSeq protein sequence ID" value="NP_001130006.1"/>
</dbReference>
<dbReference type="UCSC" id="uc010szd.2">
    <property type="organism name" value="human"/>
</dbReference>
<dbReference type="AGR" id="HGNC:37219"/>
<dbReference type="CTD" id="387890"/>
<dbReference type="DisGeNET" id="387890"/>
<dbReference type="GeneCards" id="TMEM233"/>
<dbReference type="HGNC" id="HGNC:37219">
    <property type="gene designation" value="TMEM233"/>
</dbReference>
<dbReference type="HPA" id="ENSG00000224982">
    <property type="expression patterns" value="Tissue enhanced (skeletal muscle, tongue)"/>
</dbReference>
<dbReference type="MIM" id="618296">
    <property type="type" value="gene"/>
</dbReference>
<dbReference type="neXtProt" id="NX_B4DJY2"/>
<dbReference type="OpenTargets" id="ENSG00000224982"/>
<dbReference type="PharmGKB" id="PA165513584"/>
<dbReference type="VEuPathDB" id="HostDB:ENSG00000224982"/>
<dbReference type="eggNOG" id="ENOG502S62Q">
    <property type="taxonomic scope" value="Eukaryota"/>
</dbReference>
<dbReference type="GeneTree" id="ENSGT00940000162372"/>
<dbReference type="HOGENOM" id="CLU_103195_1_0_1"/>
<dbReference type="InParanoid" id="B4DJY2"/>
<dbReference type="OMA" id="VHFTMER"/>
<dbReference type="OrthoDB" id="9946633at2759"/>
<dbReference type="PAN-GO" id="B4DJY2">
    <property type="GO annotations" value="1 GO annotation based on evolutionary models"/>
</dbReference>
<dbReference type="PhylomeDB" id="B4DJY2"/>
<dbReference type="PathwayCommons" id="B4DJY2"/>
<dbReference type="SignaLink" id="B4DJY2"/>
<dbReference type="BioGRID-ORCS" id="387890">
    <property type="hits" value="11 hits in 1142 CRISPR screens"/>
</dbReference>
<dbReference type="ChiTaRS" id="TMEM233">
    <property type="organism name" value="human"/>
</dbReference>
<dbReference type="GenomeRNAi" id="387890"/>
<dbReference type="Pharos" id="B4DJY2">
    <property type="development level" value="Tdark"/>
</dbReference>
<dbReference type="PRO" id="PR:B4DJY2"/>
<dbReference type="Proteomes" id="UP000005640">
    <property type="component" value="Chromosome 12"/>
</dbReference>
<dbReference type="RNAct" id="B4DJY2">
    <property type="molecule type" value="protein"/>
</dbReference>
<dbReference type="Bgee" id="ENSG00000224982">
    <property type="expression patterns" value="Expressed in quadriceps femoris and 91 other cell types or tissues"/>
</dbReference>
<dbReference type="GO" id="GO:0016020">
    <property type="term" value="C:membrane"/>
    <property type="evidence" value="ECO:0000318"/>
    <property type="project" value="GO_Central"/>
</dbReference>
<dbReference type="GO" id="GO:0005886">
    <property type="term" value="C:plasma membrane"/>
    <property type="evidence" value="ECO:0000314"/>
    <property type="project" value="UniProtKB"/>
</dbReference>
<dbReference type="InterPro" id="IPR051423">
    <property type="entry name" value="CD225/Dispanin"/>
</dbReference>
<dbReference type="InterPro" id="IPR007593">
    <property type="entry name" value="CD225/Dispanin_fam"/>
</dbReference>
<dbReference type="PANTHER" id="PTHR14948">
    <property type="entry name" value="NG5"/>
    <property type="match status" value="1"/>
</dbReference>
<dbReference type="PANTHER" id="PTHR14948:SF19">
    <property type="entry name" value="TRANSMEMBRANE PROTEIN 233"/>
    <property type="match status" value="1"/>
</dbReference>
<dbReference type="Pfam" id="PF04505">
    <property type="entry name" value="CD225"/>
    <property type="match status" value="1"/>
</dbReference>
<gene>
    <name evidence="5" type="primary">TMEM233</name>
    <name type="synonym">IFITMD2</name>
</gene>
<comment type="function">
    <text evidence="4">Probable accessory protein of voltage-gated sodium channels.</text>
</comment>
<comment type="subunit">
    <text evidence="4 7">Interacts with the giant stinging tree toxin ExTxA (AC P0DQP3) (PubMed:37117223). Interacts with Nav1.7/SCN9A (PubMed:37117223). Interacts with Nav1.1/SCN1A, Nav1.2/SCN2A, Nav1.3/SCN3A, Nav1.4/SCN4A, Nav1.5/SCN5A, and Nav1.6/SCN8A (Probable).</text>
</comment>
<comment type="subcellular location">
    <subcellularLocation>
        <location evidence="4">Cell membrane</location>
        <topology evidence="4">Single-pass membrane protein</topology>
    </subcellularLocation>
</comment>
<comment type="similarity">
    <text evidence="6">Belongs to the CD225/Dispanin family.</text>
</comment>
<name>TM233_HUMAN</name>
<organism>
    <name type="scientific">Homo sapiens</name>
    <name type="common">Human</name>
    <dbReference type="NCBI Taxonomy" id="9606"/>
    <lineage>
        <taxon>Eukaryota</taxon>
        <taxon>Metazoa</taxon>
        <taxon>Chordata</taxon>
        <taxon>Craniata</taxon>
        <taxon>Vertebrata</taxon>
        <taxon>Euteleostomi</taxon>
        <taxon>Mammalia</taxon>
        <taxon>Eutheria</taxon>
        <taxon>Euarchontoglires</taxon>
        <taxon>Primates</taxon>
        <taxon>Haplorrhini</taxon>
        <taxon>Catarrhini</taxon>
        <taxon>Hominidae</taxon>
        <taxon>Homo</taxon>
    </lineage>
</organism>
<proteinExistence type="evidence at protein level"/>
<keyword id="KW-1003">Cell membrane</keyword>
<keyword id="KW-0472">Membrane</keyword>
<keyword id="KW-1267">Proteomics identification</keyword>
<keyword id="KW-1185">Reference proteome</keyword>
<keyword id="KW-0812">Transmembrane</keyword>
<keyword id="KW-1133">Transmembrane helix</keyword>